<accession>J9VQB3</accession>
<accession>P0CQ40</accession>
<accession>P18132</accession>
<accession>Q55PW2</accession>
<accession>Q5KDJ6</accession>
<protein>
    <recommendedName>
        <fullName>Orotate phosphoribosyltransferase</fullName>
        <shortName>OPRT</shortName>
        <shortName>OPRTase</shortName>
        <ecNumber>2.4.2.10</ecNumber>
    </recommendedName>
</protein>
<keyword id="KW-0328">Glycosyltransferase</keyword>
<keyword id="KW-0665">Pyrimidine biosynthesis</keyword>
<keyword id="KW-0808">Transferase</keyword>
<organism>
    <name type="scientific">Cryptococcus neoformans var. grubii serotype A (strain H99 / ATCC 208821 / CBS 10515 / FGSC 9487)</name>
    <name type="common">Filobasidiella neoformans var. grubii</name>
    <dbReference type="NCBI Taxonomy" id="235443"/>
    <lineage>
        <taxon>Eukaryota</taxon>
        <taxon>Fungi</taxon>
        <taxon>Dikarya</taxon>
        <taxon>Basidiomycota</taxon>
        <taxon>Agaricomycotina</taxon>
        <taxon>Tremellomycetes</taxon>
        <taxon>Tremellales</taxon>
        <taxon>Cryptococcaceae</taxon>
        <taxon>Cryptococcus</taxon>
        <taxon>Cryptococcus neoformans species complex</taxon>
    </lineage>
</organism>
<evidence type="ECO:0000250" key="1"/>
<evidence type="ECO:0000305" key="2"/>
<reference key="1">
    <citation type="submission" date="1997-11" db="EMBL/GenBank/DDBJ databases">
        <authorList>
            <person name="Franzot S.P."/>
            <person name="Fries B.C."/>
            <person name="Casadevall A."/>
        </authorList>
    </citation>
    <scope>NUCLEOTIDE SEQUENCE [GENOMIC DNA]</scope>
    <source>
        <strain>H99 / ATCC 208821 / CBS 10515 / FGSC 9487</strain>
    </source>
</reference>
<reference key="2">
    <citation type="journal article" date="2014" name="PLoS Genet.">
        <title>Analysis of the genome and transcriptome of Cryptococcus neoformans var. grubii reveals complex RNA expression and microevolution leading to virulence attenuation.</title>
        <authorList>
            <person name="Janbon G."/>
            <person name="Ormerod K.L."/>
            <person name="Paulet D."/>
            <person name="Byrnes E.J. III"/>
            <person name="Yadav V."/>
            <person name="Chatterjee G."/>
            <person name="Mullapudi N."/>
            <person name="Hon C.-C."/>
            <person name="Billmyre R.B."/>
            <person name="Brunel F."/>
            <person name="Bahn Y.-S."/>
            <person name="Chen W."/>
            <person name="Chen Y."/>
            <person name="Chow E.W.L."/>
            <person name="Coppee J.-Y."/>
            <person name="Floyd-Averette A."/>
            <person name="Gaillardin C."/>
            <person name="Gerik K.J."/>
            <person name="Goldberg J."/>
            <person name="Gonzalez-Hilarion S."/>
            <person name="Gujja S."/>
            <person name="Hamlin J.L."/>
            <person name="Hsueh Y.-P."/>
            <person name="Ianiri G."/>
            <person name="Jones S."/>
            <person name="Kodira C.D."/>
            <person name="Kozubowski L."/>
            <person name="Lam W."/>
            <person name="Marra M."/>
            <person name="Mesner L.D."/>
            <person name="Mieczkowski P.A."/>
            <person name="Moyrand F."/>
            <person name="Nielsen K."/>
            <person name="Proux C."/>
            <person name="Rossignol T."/>
            <person name="Schein J.E."/>
            <person name="Sun S."/>
            <person name="Wollschlaeger C."/>
            <person name="Wood I.A."/>
            <person name="Zeng Q."/>
            <person name="Neuveglise C."/>
            <person name="Newlon C.S."/>
            <person name="Perfect J.R."/>
            <person name="Lodge J.K."/>
            <person name="Idnurm A."/>
            <person name="Stajich J.E."/>
            <person name="Kronstad J.W."/>
            <person name="Sanyal K."/>
            <person name="Heitman J."/>
            <person name="Fraser J.A."/>
            <person name="Cuomo C.A."/>
            <person name="Dietrich F.S."/>
        </authorList>
    </citation>
    <scope>NUCLEOTIDE SEQUENCE [LARGE SCALE GENOMIC DNA]</scope>
    <source>
        <strain>H99 / ATCC 208821 / CBS 10515 / FGSC 9487</strain>
    </source>
</reference>
<gene>
    <name type="primary">URA5</name>
    <name type="ORF">CNAG_03196</name>
</gene>
<name>PYRE_CRYNH</name>
<feature type="chain" id="PRO_0000421128" description="Orotate phosphoribosyltransferase">
    <location>
        <begin position="1"/>
        <end position="225"/>
    </location>
</feature>
<feature type="binding site" description="in other chain" evidence="1">
    <location>
        <position position="31"/>
    </location>
    <ligand>
        <name>5-phospho-alpha-D-ribose 1-diphosphate</name>
        <dbReference type="ChEBI" id="CHEBI:58017"/>
        <note>ligand shared between dimeric partners</note>
    </ligand>
</feature>
<feature type="binding site" evidence="1">
    <location>
        <begin position="39"/>
        <end position="40"/>
    </location>
    <ligand>
        <name>orotate</name>
        <dbReference type="ChEBI" id="CHEBI:30839"/>
    </ligand>
</feature>
<feature type="binding site" description="in other chain" evidence="1">
    <location>
        <begin position="78"/>
        <end position="79"/>
    </location>
    <ligand>
        <name>5-phospho-alpha-D-ribose 1-diphosphate</name>
        <dbReference type="ChEBI" id="CHEBI:58017"/>
        <note>ligand shared between dimeric partners</note>
    </ligand>
</feature>
<feature type="binding site" evidence="1">
    <location>
        <position position="105"/>
    </location>
    <ligand>
        <name>5-phospho-alpha-D-ribose 1-diphosphate</name>
        <dbReference type="ChEBI" id="CHEBI:58017"/>
        <note>ligand shared between dimeric partners</note>
    </ligand>
</feature>
<feature type="binding site" description="in other chain" evidence="1">
    <location>
        <position position="106"/>
    </location>
    <ligand>
        <name>5-phospho-alpha-D-ribose 1-diphosphate</name>
        <dbReference type="ChEBI" id="CHEBI:58017"/>
        <note>ligand shared between dimeric partners</note>
    </ligand>
</feature>
<feature type="binding site" evidence="1">
    <location>
        <position position="109"/>
    </location>
    <ligand>
        <name>5-phospho-alpha-D-ribose 1-diphosphate</name>
        <dbReference type="ChEBI" id="CHEBI:58017"/>
        <note>ligand shared between dimeric partners</note>
    </ligand>
</feature>
<feature type="binding site" evidence="1">
    <location>
        <position position="111"/>
    </location>
    <ligand>
        <name>5-phospho-alpha-D-ribose 1-diphosphate</name>
        <dbReference type="ChEBI" id="CHEBI:58017"/>
        <note>ligand shared between dimeric partners</note>
    </ligand>
</feature>
<feature type="binding site" description="in other chain" evidence="1">
    <location>
        <begin position="130"/>
        <end position="138"/>
    </location>
    <ligand>
        <name>5-phospho-alpha-D-ribose 1-diphosphate</name>
        <dbReference type="ChEBI" id="CHEBI:58017"/>
        <note>ligand shared between dimeric partners</note>
    </ligand>
</feature>
<feature type="binding site" evidence="1">
    <location>
        <position position="134"/>
    </location>
    <ligand>
        <name>orotate</name>
        <dbReference type="ChEBI" id="CHEBI:30839"/>
    </ligand>
</feature>
<feature type="binding site" evidence="1">
    <location>
        <position position="163"/>
    </location>
    <ligand>
        <name>orotate</name>
        <dbReference type="ChEBI" id="CHEBI:30839"/>
    </ligand>
</feature>
<proteinExistence type="inferred from homology"/>
<dbReference type="EC" id="2.4.2.10"/>
<dbReference type="EMBL" id="AF032436">
    <property type="protein sequence ID" value="AAB86891.1"/>
    <property type="molecule type" value="Genomic_DNA"/>
</dbReference>
<dbReference type="EMBL" id="CP003827">
    <property type="protein sequence ID" value="AFR96423.1"/>
    <property type="molecule type" value="Genomic_DNA"/>
</dbReference>
<dbReference type="RefSeq" id="XP_012051090.1">
    <property type="nucleotide sequence ID" value="XM_012195700.1"/>
</dbReference>
<dbReference type="SMR" id="J9VQB3"/>
<dbReference type="GeneID" id="23886721"/>
<dbReference type="KEGG" id="cng:CNAG_03196"/>
<dbReference type="VEuPathDB" id="FungiDB:CNAG_03196"/>
<dbReference type="HOGENOM" id="CLU_074878_0_1_1"/>
<dbReference type="OrthoDB" id="6159at5206"/>
<dbReference type="UniPathway" id="UPA00070">
    <property type="reaction ID" value="UER00119"/>
</dbReference>
<dbReference type="Proteomes" id="UP000010091">
    <property type="component" value="Chromosome 8"/>
</dbReference>
<dbReference type="GO" id="GO:0005737">
    <property type="term" value="C:cytoplasm"/>
    <property type="evidence" value="ECO:0007669"/>
    <property type="project" value="TreeGrafter"/>
</dbReference>
<dbReference type="GO" id="GO:0004588">
    <property type="term" value="F:orotate phosphoribosyltransferase activity"/>
    <property type="evidence" value="ECO:0007669"/>
    <property type="project" value="UniProtKB-EC"/>
</dbReference>
<dbReference type="GO" id="GO:0006207">
    <property type="term" value="P:'de novo' pyrimidine nucleobase biosynthetic process"/>
    <property type="evidence" value="ECO:0007669"/>
    <property type="project" value="TreeGrafter"/>
</dbReference>
<dbReference type="GO" id="GO:0044205">
    <property type="term" value="P:'de novo' UMP biosynthetic process"/>
    <property type="evidence" value="ECO:0007669"/>
    <property type="project" value="UniProtKB-UniPathway"/>
</dbReference>
<dbReference type="GO" id="GO:0046132">
    <property type="term" value="P:pyrimidine ribonucleoside biosynthetic process"/>
    <property type="evidence" value="ECO:0007669"/>
    <property type="project" value="TreeGrafter"/>
</dbReference>
<dbReference type="CDD" id="cd06223">
    <property type="entry name" value="PRTases_typeI"/>
    <property type="match status" value="1"/>
</dbReference>
<dbReference type="FunFam" id="3.40.50.2020:FF:000008">
    <property type="entry name" value="Orotate phosphoribosyltransferase"/>
    <property type="match status" value="1"/>
</dbReference>
<dbReference type="Gene3D" id="3.40.50.2020">
    <property type="match status" value="1"/>
</dbReference>
<dbReference type="HAMAP" id="MF_01208">
    <property type="entry name" value="PyrE"/>
    <property type="match status" value="1"/>
</dbReference>
<dbReference type="InterPro" id="IPR023031">
    <property type="entry name" value="OPRT"/>
</dbReference>
<dbReference type="InterPro" id="IPR004467">
    <property type="entry name" value="Or_phspho_trans_dom"/>
</dbReference>
<dbReference type="InterPro" id="IPR000836">
    <property type="entry name" value="PRibTrfase_dom"/>
</dbReference>
<dbReference type="InterPro" id="IPR029057">
    <property type="entry name" value="PRTase-like"/>
</dbReference>
<dbReference type="NCBIfam" id="TIGR00336">
    <property type="entry name" value="pyrE"/>
    <property type="match status" value="1"/>
</dbReference>
<dbReference type="PANTHER" id="PTHR46683">
    <property type="entry name" value="OROTATE PHOSPHORIBOSYLTRANSFERASE 1-RELATED"/>
    <property type="match status" value="1"/>
</dbReference>
<dbReference type="PANTHER" id="PTHR46683:SF1">
    <property type="entry name" value="OROTATE PHOSPHORIBOSYLTRANSFERASE 1-RELATED"/>
    <property type="match status" value="1"/>
</dbReference>
<dbReference type="Pfam" id="PF00156">
    <property type="entry name" value="Pribosyltran"/>
    <property type="match status" value="1"/>
</dbReference>
<dbReference type="SUPFAM" id="SSF53271">
    <property type="entry name" value="PRTase-like"/>
    <property type="match status" value="1"/>
</dbReference>
<dbReference type="PROSITE" id="PS00103">
    <property type="entry name" value="PUR_PYR_PR_TRANSFER"/>
    <property type="match status" value="1"/>
</dbReference>
<comment type="function">
    <text evidence="1">Catalyzes the transfer of a ribosyl phosphate group from 5-phosphoribose 1-diphosphate to orotate, leading to the formation of orotidine monophosphate (OMP).</text>
</comment>
<comment type="catalytic activity">
    <reaction>
        <text>orotidine 5'-phosphate + diphosphate = orotate + 5-phospho-alpha-D-ribose 1-diphosphate</text>
        <dbReference type="Rhea" id="RHEA:10380"/>
        <dbReference type="ChEBI" id="CHEBI:30839"/>
        <dbReference type="ChEBI" id="CHEBI:33019"/>
        <dbReference type="ChEBI" id="CHEBI:57538"/>
        <dbReference type="ChEBI" id="CHEBI:58017"/>
        <dbReference type="EC" id="2.4.2.10"/>
    </reaction>
</comment>
<comment type="pathway">
    <text>Pyrimidine metabolism; UMP biosynthesis via de novo pathway; UMP from orotate: step 1/2.</text>
</comment>
<comment type="subunit">
    <text evidence="1">Homodimer.</text>
</comment>
<comment type="similarity">
    <text evidence="2">Belongs to the purine/pyrimidine phosphoribosyltransferase family. PyrE subfamily.</text>
</comment>
<sequence length="225" mass="24433">MSSQALDSAKIAFIEAAIEHGVLLFGNFTLKSGRQSPYFFNAGLLYSSSLLSTTAQAYAKVLSSSRIPDFDVLFGPAYKGISLAAVSAVSLYQQTGKDIGYCYNRKEKKDHGEGGTMVGAPLKGRIVIIDDVLTSGKAIREAIDILKASPEAKLVGIVQLVDRQEKGQSGSGKSTVQEVEEEFGVPVEPIIGLDDIVKYLESSGKWEKELQEVRKYRAEYGVQRS</sequence>